<sequence>MDYQVSSPTYDIDYYTSEPCQKVNVKQIAARLLPPLYSLVFIFGFVGNILVVLILINCKRLKSMTDIYLLNLAISDLFFLLTVPFWAHYAAAQWDFGNTMCQLLTGLYFIGFFSGIFFIILLTIDRYLAIVHAVFALKARTVTFGVVTSVITWVVAVFASLPGIIFTRSQREGLHYTCSSHFPYSQYQFWKNFQTLKIVILGLVLPLLVMVICYSGILKTLLRCRNEKKRHRAVRLIFTIMIVYFLFWAPYNIVLLLNTFQEFFGLNNCSSSNRLDQAMQVTETLGMTHCCINPIIYAFVGEKFRNYLLVFFQKHIAKRFCKCCSIFQQEAPERASSVYTRSTGEQETSVGL</sequence>
<proteinExistence type="inferred from homology"/>
<comment type="function">
    <text evidence="1">Receptor for a number of inflammatory CC-chemokines including CCL3/MIP-1-alpha, CCL4/MIP-1-beta and RANTES and subsequently transduces a signal by increasing the intracellular calcium ion level. May play a role in the control of granulocytic lineage proliferation or differentiation. Participates in T-lymphocyte migration to the infection site by acting as a chemotactic receptor.</text>
</comment>
<comment type="subunit">
    <text evidence="1">Interacts with PRAF2. Efficient ligand binding to CCL3/MIP-1alpha and CCL4/MIP-1beta requires sulfation, O-glycosylation and sialic acid modifications. Glycosylation on Ser-6 is required for efficient binding of CCL4. Interacts with GRK2. Interacts with ARRB1 and ARRB2. Interacts with CNIH4. Interacts with S100A4; this interaction stimulates T-lymphocyte chemotaxis.</text>
</comment>
<comment type="subcellular location">
    <subcellularLocation>
        <location evidence="2">Cell membrane</location>
        <topology evidence="2">Multi-pass membrane protein</topology>
    </subcellularLocation>
</comment>
<comment type="PTM">
    <text evidence="1">Sulfated on at least 2 of the N-terminal tyrosines. Sulfation is required for efficient binding of the chemokines, CCL3 and CCL4 (By similarity).</text>
</comment>
<comment type="PTM">
    <text evidence="1">Palmitoylation in the C-terminal is important for cell surface expression.</text>
</comment>
<comment type="PTM">
    <text evidence="1">Phosphorylation on serine residues in the C-terminal is stimulated by binding CC chemokines especially by APO-RANTES.</text>
</comment>
<comment type="PTM">
    <text evidence="1">O-glycosylated, but not N-glycosylated. Ser-6 appears to be the major site even if Ser-7 may be also O-glycosylated. Also sialylated glycans present which contribute to chemokine binding. Thr-16 and Ser-17 may also be glycosylated and, if so, with small moieties such as a T-antigen.</text>
</comment>
<comment type="similarity">
    <text evidence="4">Belongs to the G-protein coupled receptor 1 family.</text>
</comment>
<reference key="1">
    <citation type="journal article" date="1999" name="Mol. Biol. Evol.">
        <title>Sequence evolution of the CCR5 chemokine receptor gene in primates.</title>
        <authorList>
            <person name="Zhang Y.-W."/>
            <person name="Ryder O.A."/>
            <person name="Zhang Y.-P."/>
        </authorList>
    </citation>
    <scope>NUCLEOTIDE SEQUENCE [GENOMIC DNA]</scope>
</reference>
<accession>O97878</accession>
<organism>
    <name type="scientific">Trachypithecus francoisi</name>
    <name type="common">Francois' leaf monkey</name>
    <name type="synonym">Presbytis francoisi</name>
    <dbReference type="NCBI Taxonomy" id="54180"/>
    <lineage>
        <taxon>Eukaryota</taxon>
        <taxon>Metazoa</taxon>
        <taxon>Chordata</taxon>
        <taxon>Craniata</taxon>
        <taxon>Vertebrata</taxon>
        <taxon>Euteleostomi</taxon>
        <taxon>Mammalia</taxon>
        <taxon>Eutheria</taxon>
        <taxon>Euarchontoglires</taxon>
        <taxon>Primates</taxon>
        <taxon>Haplorrhini</taxon>
        <taxon>Catarrhini</taxon>
        <taxon>Cercopithecidae</taxon>
        <taxon>Colobinae</taxon>
        <taxon>Trachypithecus</taxon>
    </lineage>
</organism>
<feature type="chain" id="PRO_0000069283" description="C-C chemokine receptor type 5">
    <location>
        <begin position="1"/>
        <end position="352"/>
    </location>
</feature>
<feature type="topological domain" description="Extracellular" evidence="3">
    <location>
        <begin position="1"/>
        <end position="30"/>
    </location>
</feature>
<feature type="transmembrane region" description="Helical; Name=1" evidence="3">
    <location>
        <begin position="31"/>
        <end position="58"/>
    </location>
</feature>
<feature type="topological domain" description="Cytoplasmic" evidence="3">
    <location>
        <begin position="59"/>
        <end position="68"/>
    </location>
</feature>
<feature type="transmembrane region" description="Helical; Name=2" evidence="3">
    <location>
        <begin position="69"/>
        <end position="89"/>
    </location>
</feature>
<feature type="topological domain" description="Extracellular" evidence="3">
    <location>
        <begin position="90"/>
        <end position="102"/>
    </location>
</feature>
<feature type="transmembrane region" description="Helical; Name=3" evidence="3">
    <location>
        <begin position="103"/>
        <end position="124"/>
    </location>
</feature>
<feature type="topological domain" description="Cytoplasmic" evidence="3">
    <location>
        <begin position="125"/>
        <end position="141"/>
    </location>
</feature>
<feature type="transmembrane region" description="Helical; Name=4" evidence="3">
    <location>
        <begin position="142"/>
        <end position="166"/>
    </location>
</feature>
<feature type="topological domain" description="Extracellular" evidence="3">
    <location>
        <begin position="167"/>
        <end position="198"/>
    </location>
</feature>
<feature type="transmembrane region" description="Helical; Name=5" evidence="3">
    <location>
        <begin position="199"/>
        <end position="218"/>
    </location>
</feature>
<feature type="topological domain" description="Cytoplasmic" evidence="3">
    <location>
        <begin position="219"/>
        <end position="235"/>
    </location>
</feature>
<feature type="transmembrane region" description="Helical; Name=6" evidence="3">
    <location>
        <begin position="236"/>
        <end position="260"/>
    </location>
</feature>
<feature type="topological domain" description="Extracellular" evidence="3">
    <location>
        <begin position="261"/>
        <end position="277"/>
    </location>
</feature>
<feature type="transmembrane region" description="Helical; Name=7" evidence="3">
    <location>
        <begin position="278"/>
        <end position="301"/>
    </location>
</feature>
<feature type="topological domain" description="Cytoplasmic" evidence="3">
    <location>
        <begin position="302"/>
        <end position="352"/>
    </location>
</feature>
<feature type="modified residue" description="Sulfotyrosine" evidence="1">
    <location>
        <position position="3"/>
    </location>
</feature>
<feature type="modified residue" description="Sulfotyrosine" evidence="3">
    <location>
        <position position="10"/>
    </location>
</feature>
<feature type="modified residue" description="Sulfotyrosine" evidence="3">
    <location>
        <position position="14"/>
    </location>
</feature>
<feature type="modified residue" description="Sulfotyrosine" evidence="3">
    <location>
        <position position="15"/>
    </location>
</feature>
<feature type="modified residue" description="Phosphoserine; by BARK1" evidence="1">
    <location>
        <position position="336"/>
    </location>
</feature>
<feature type="modified residue" description="Phosphoserine; by BARK1" evidence="1">
    <location>
        <position position="337"/>
    </location>
</feature>
<feature type="modified residue" description="Phosphoserine; by BARK1" evidence="1">
    <location>
        <position position="342"/>
    </location>
</feature>
<feature type="modified residue" description="Phosphoserine; by BARK1" evidence="1">
    <location>
        <position position="349"/>
    </location>
</feature>
<feature type="lipid moiety-binding region" description="S-palmitoyl cysteine" evidence="1">
    <location>
        <position position="321"/>
    </location>
</feature>
<feature type="lipid moiety-binding region" description="S-palmitoyl cysteine" evidence="1">
    <location>
        <position position="323"/>
    </location>
</feature>
<feature type="lipid moiety-binding region" description="S-palmitoyl cysteine" evidence="1">
    <location>
        <position position="324"/>
    </location>
</feature>
<feature type="glycosylation site" description="O-linked (GalNAc...) serine" evidence="1">
    <location>
        <position position="6"/>
    </location>
</feature>
<feature type="glycosylation site" description="O-linked (GalNAc...) serine" evidence="1">
    <location>
        <position position="7"/>
    </location>
</feature>
<feature type="disulfide bond" evidence="1">
    <location>
        <begin position="20"/>
        <end position="269"/>
    </location>
</feature>
<feature type="disulfide bond" evidence="4">
    <location>
        <begin position="101"/>
        <end position="178"/>
    </location>
</feature>
<evidence type="ECO:0000250" key="1">
    <source>
        <dbReference type="UniProtKB" id="P51681"/>
    </source>
</evidence>
<evidence type="ECO:0000250" key="2">
    <source>
        <dbReference type="UniProtKB" id="Q9XT76"/>
    </source>
</evidence>
<evidence type="ECO:0000255" key="3"/>
<evidence type="ECO:0000255" key="4">
    <source>
        <dbReference type="PROSITE-ProRule" id="PRU00521"/>
    </source>
</evidence>
<protein>
    <recommendedName>
        <fullName>C-C chemokine receptor type 5</fullName>
        <shortName>C-C CKR-5</shortName>
        <shortName>CC-CKR-5</shortName>
        <shortName>CCR-5</shortName>
        <shortName>CCR5</shortName>
    </recommendedName>
    <cdAntigenName>CD195</cdAntigenName>
</protein>
<name>CCR5_TRAFR</name>
<gene>
    <name type="primary">CCR5</name>
    <name type="synonym">CMKBR5</name>
</gene>
<dbReference type="EMBL" id="AF075442">
    <property type="protein sequence ID" value="AAD19854.1"/>
    <property type="molecule type" value="Genomic_DNA"/>
</dbReference>
<dbReference type="SMR" id="O97878"/>
<dbReference type="GlyCosmos" id="O97878">
    <property type="glycosylation" value="2 sites, No reported glycans"/>
</dbReference>
<dbReference type="GO" id="GO:0005737">
    <property type="term" value="C:cytoplasm"/>
    <property type="evidence" value="ECO:0007669"/>
    <property type="project" value="TreeGrafter"/>
</dbReference>
<dbReference type="GO" id="GO:0009897">
    <property type="term" value="C:external side of plasma membrane"/>
    <property type="evidence" value="ECO:0000250"/>
    <property type="project" value="UniProtKB"/>
</dbReference>
<dbReference type="GO" id="GO:0016493">
    <property type="term" value="F:C-C chemokine receptor activity"/>
    <property type="evidence" value="ECO:0000250"/>
    <property type="project" value="UniProtKB"/>
</dbReference>
<dbReference type="GO" id="GO:0071791">
    <property type="term" value="F:chemokine (C-C motif) ligand 5 binding"/>
    <property type="evidence" value="ECO:0007669"/>
    <property type="project" value="TreeGrafter"/>
</dbReference>
<dbReference type="GO" id="GO:0019722">
    <property type="term" value="P:calcium-mediated signaling"/>
    <property type="evidence" value="ECO:0007669"/>
    <property type="project" value="TreeGrafter"/>
</dbReference>
<dbReference type="GO" id="GO:0060326">
    <property type="term" value="P:cell chemotaxis"/>
    <property type="evidence" value="ECO:0007669"/>
    <property type="project" value="TreeGrafter"/>
</dbReference>
<dbReference type="GO" id="GO:0006955">
    <property type="term" value="P:immune response"/>
    <property type="evidence" value="ECO:0007669"/>
    <property type="project" value="InterPro"/>
</dbReference>
<dbReference type="GO" id="GO:0006954">
    <property type="term" value="P:inflammatory response"/>
    <property type="evidence" value="ECO:0007669"/>
    <property type="project" value="InterPro"/>
</dbReference>
<dbReference type="GO" id="GO:0007204">
    <property type="term" value="P:positive regulation of cytosolic calcium ion concentration"/>
    <property type="evidence" value="ECO:0007669"/>
    <property type="project" value="TreeGrafter"/>
</dbReference>
<dbReference type="CDD" id="cd15184">
    <property type="entry name" value="7tmA_CCR5_CCR2"/>
    <property type="match status" value="1"/>
</dbReference>
<dbReference type="FunFam" id="1.20.1070.10:FF:000026">
    <property type="entry name" value="C-C chemokine receptor type 5"/>
    <property type="match status" value="1"/>
</dbReference>
<dbReference type="Gene3D" id="1.20.1070.10">
    <property type="entry name" value="Rhodopsin 7-helix transmembrane proteins"/>
    <property type="match status" value="1"/>
</dbReference>
<dbReference type="InterPro" id="IPR050119">
    <property type="entry name" value="CCR1-9-like"/>
</dbReference>
<dbReference type="InterPro" id="IPR002240">
    <property type="entry name" value="Chemokine_CCR5"/>
</dbReference>
<dbReference type="InterPro" id="IPR000355">
    <property type="entry name" value="Chemokine_rcpt"/>
</dbReference>
<dbReference type="InterPro" id="IPR000276">
    <property type="entry name" value="GPCR_Rhodpsn"/>
</dbReference>
<dbReference type="InterPro" id="IPR017452">
    <property type="entry name" value="GPCR_Rhodpsn_7TM"/>
</dbReference>
<dbReference type="PANTHER" id="PTHR10489:SF686">
    <property type="entry name" value="C-C CHEMOKINE RECEPTOR TYPE 5"/>
    <property type="match status" value="1"/>
</dbReference>
<dbReference type="PANTHER" id="PTHR10489">
    <property type="entry name" value="CELL ADHESION MOLECULE"/>
    <property type="match status" value="1"/>
</dbReference>
<dbReference type="Pfam" id="PF00001">
    <property type="entry name" value="7tm_1"/>
    <property type="match status" value="1"/>
</dbReference>
<dbReference type="PRINTS" id="PR00657">
    <property type="entry name" value="CCCHEMOKINER"/>
</dbReference>
<dbReference type="PRINTS" id="PR01110">
    <property type="entry name" value="CHEMOKINER5"/>
</dbReference>
<dbReference type="PRINTS" id="PR00237">
    <property type="entry name" value="GPCRRHODOPSN"/>
</dbReference>
<dbReference type="SUPFAM" id="SSF81321">
    <property type="entry name" value="Family A G protein-coupled receptor-like"/>
    <property type="match status" value="1"/>
</dbReference>
<dbReference type="PROSITE" id="PS00237">
    <property type="entry name" value="G_PROTEIN_RECEP_F1_1"/>
    <property type="match status" value="1"/>
</dbReference>
<dbReference type="PROSITE" id="PS50262">
    <property type="entry name" value="G_PROTEIN_RECEP_F1_2"/>
    <property type="match status" value="1"/>
</dbReference>
<keyword id="KW-1003">Cell membrane</keyword>
<keyword id="KW-1015">Disulfide bond</keyword>
<keyword id="KW-0297">G-protein coupled receptor</keyword>
<keyword id="KW-0325">Glycoprotein</keyword>
<keyword id="KW-0449">Lipoprotein</keyword>
<keyword id="KW-0472">Membrane</keyword>
<keyword id="KW-0564">Palmitate</keyword>
<keyword id="KW-0597">Phosphoprotein</keyword>
<keyword id="KW-0675">Receptor</keyword>
<keyword id="KW-0765">Sulfation</keyword>
<keyword id="KW-0807">Transducer</keyword>
<keyword id="KW-0812">Transmembrane</keyword>
<keyword id="KW-1133">Transmembrane helix</keyword>